<protein>
    <recommendedName>
        <fullName>Nudix hydrolase 1</fullName>
        <shortName>AtNUDT1</shortName>
    </recommendedName>
    <alternativeName>
        <fullName>7,8-dihydro-8-oxoguanine-triphosphatase</fullName>
    </alternativeName>
    <alternativeName>
        <fullName>8-oxo-dGTP diphosphatase</fullName>
        <shortName>8-oxo-dGTPase</shortName>
        <ecNumber>3.6.1.55</ecNumber>
    </alternativeName>
    <alternativeName>
        <fullName>Dihydroneopterin triphosphate diphosphatase</fullName>
        <ecNumber evidence="4">3.6.1.67</ecNumber>
    </alternativeName>
    <alternativeName>
        <fullName>Dihydroneopterin triphosphate pyrophosphohydrolase</fullName>
        <shortName>DHNTP pyrophosphohydrolase</shortName>
    </alternativeName>
    <alternativeName>
        <fullName>NADH pyrophosphatase</fullName>
        <ecNumber>3.6.1.22</ecNumber>
    </alternativeName>
</protein>
<organism>
    <name type="scientific">Arabidopsis thaliana</name>
    <name type="common">Mouse-ear cress</name>
    <dbReference type="NCBI Taxonomy" id="3702"/>
    <lineage>
        <taxon>Eukaryota</taxon>
        <taxon>Viridiplantae</taxon>
        <taxon>Streptophyta</taxon>
        <taxon>Embryophyta</taxon>
        <taxon>Tracheophyta</taxon>
        <taxon>Spermatophyta</taxon>
        <taxon>Magnoliopsida</taxon>
        <taxon>eudicotyledons</taxon>
        <taxon>Gunneridae</taxon>
        <taxon>Pentapetalae</taxon>
        <taxon>rosids</taxon>
        <taxon>malvids</taxon>
        <taxon>Brassicales</taxon>
        <taxon>Brassicaceae</taxon>
        <taxon>Camelineae</taxon>
        <taxon>Arabidopsis</taxon>
    </lineage>
</organism>
<proteinExistence type="evidence at protein level"/>
<feature type="initiator methionine" description="Removed" evidence="8">
    <location>
        <position position="1"/>
    </location>
</feature>
<feature type="chain" id="PRO_0000057121" description="Nudix hydrolase 1">
    <location>
        <begin position="2"/>
        <end position="147"/>
    </location>
</feature>
<feature type="domain" description="Nudix hydrolase" evidence="2">
    <location>
        <begin position="7"/>
        <end position="140"/>
    </location>
</feature>
<feature type="short sequence motif" description="Nudix box">
    <location>
        <begin position="41"/>
        <end position="62"/>
    </location>
</feature>
<feature type="binding site" evidence="1">
    <location>
        <position position="56"/>
    </location>
    <ligand>
        <name>Mg(2+)</name>
        <dbReference type="ChEBI" id="CHEBI:18420"/>
    </ligand>
</feature>
<feature type="binding site" evidence="1">
    <location>
        <position position="60"/>
    </location>
    <ligand>
        <name>Mg(2+)</name>
        <dbReference type="ChEBI" id="CHEBI:18420"/>
    </ligand>
</feature>
<feature type="modified residue" description="N-acetylserine" evidence="8">
    <location>
        <position position="2"/>
    </location>
</feature>
<feature type="strand" evidence="9">
    <location>
        <begin position="9"/>
        <end position="18"/>
    </location>
</feature>
<feature type="strand" evidence="9">
    <location>
        <begin position="21"/>
        <end position="27"/>
    </location>
</feature>
<feature type="strand" evidence="9">
    <location>
        <begin position="29"/>
        <end position="32"/>
    </location>
</feature>
<feature type="strand" evidence="9">
    <location>
        <begin position="39"/>
        <end position="42"/>
    </location>
</feature>
<feature type="helix" evidence="9">
    <location>
        <begin position="49"/>
        <end position="61"/>
    </location>
</feature>
<feature type="strand" evidence="9">
    <location>
        <begin position="65"/>
        <end position="78"/>
    </location>
</feature>
<feature type="strand" evidence="9">
    <location>
        <begin position="81"/>
        <end position="83"/>
    </location>
</feature>
<feature type="strand" evidence="9">
    <location>
        <begin position="85"/>
        <end position="98"/>
    </location>
</feature>
<feature type="turn" evidence="9">
    <location>
        <begin position="108"/>
        <end position="110"/>
    </location>
</feature>
<feature type="strand" evidence="9">
    <location>
        <begin position="111"/>
        <end position="118"/>
    </location>
</feature>
<feature type="helix" evidence="10">
    <location>
        <begin position="119"/>
        <end position="121"/>
    </location>
</feature>
<feature type="strand" evidence="9">
    <location>
        <begin position="124"/>
        <end position="126"/>
    </location>
</feature>
<feature type="helix" evidence="9">
    <location>
        <begin position="128"/>
        <end position="135"/>
    </location>
</feature>
<feature type="turn" evidence="9">
    <location>
        <begin position="140"/>
        <end position="142"/>
    </location>
</feature>
<dbReference type="EC" id="3.6.1.55"/>
<dbReference type="EC" id="3.6.1.67" evidence="4"/>
<dbReference type="EC" id="3.6.1.22"/>
<dbReference type="EMBL" id="AC011914">
    <property type="protein sequence ID" value="AAG52038.1"/>
    <property type="molecule type" value="Genomic_DNA"/>
</dbReference>
<dbReference type="EMBL" id="CP002684">
    <property type="protein sequence ID" value="AEE34836.1"/>
    <property type="molecule type" value="Genomic_DNA"/>
</dbReference>
<dbReference type="EMBL" id="AK117564">
    <property type="protein sequence ID" value="BAC42225.1"/>
    <property type="molecule type" value="mRNA"/>
</dbReference>
<dbReference type="EMBL" id="BT005039">
    <property type="protein sequence ID" value="AAO50572.1"/>
    <property type="molecule type" value="mRNA"/>
</dbReference>
<dbReference type="EMBL" id="AK176885">
    <property type="protein sequence ID" value="BAD44648.1"/>
    <property type="molecule type" value="mRNA"/>
</dbReference>
<dbReference type="EMBL" id="AY088162">
    <property type="protein sequence ID" value="AAM65706.1"/>
    <property type="molecule type" value="mRNA"/>
</dbReference>
<dbReference type="PIR" id="D96712">
    <property type="entry name" value="D96712"/>
</dbReference>
<dbReference type="RefSeq" id="NP_177044.1">
    <property type="nucleotide sequence ID" value="NM_105549.4"/>
</dbReference>
<dbReference type="PDB" id="5GP0">
    <property type="method" value="X-ray"/>
    <property type="resolution" value="1.70 A"/>
    <property type="chains" value="A/E/F/I=1-147"/>
</dbReference>
<dbReference type="PDB" id="5WWD">
    <property type="method" value="X-ray"/>
    <property type="resolution" value="1.39 A"/>
    <property type="chains" value="A/B=1-147"/>
</dbReference>
<dbReference type="PDB" id="5WY6">
    <property type="method" value="X-ray"/>
    <property type="resolution" value="1.78 A"/>
    <property type="chains" value="A/E=1-147"/>
</dbReference>
<dbReference type="PDB" id="6DBY">
    <property type="method" value="X-ray"/>
    <property type="resolution" value="2.00 A"/>
    <property type="chains" value="A/B=1-147"/>
</dbReference>
<dbReference type="PDB" id="6DBZ">
    <property type="method" value="X-ray"/>
    <property type="resolution" value="1.90 A"/>
    <property type="chains" value="A/B=1-147"/>
</dbReference>
<dbReference type="PDB" id="6FL4">
    <property type="method" value="X-ray"/>
    <property type="resolution" value="1.60 A"/>
    <property type="chains" value="A/B=1-147"/>
</dbReference>
<dbReference type="PDBsum" id="5GP0"/>
<dbReference type="PDBsum" id="5WWD"/>
<dbReference type="PDBsum" id="5WY6"/>
<dbReference type="PDBsum" id="6DBY"/>
<dbReference type="PDBsum" id="6DBZ"/>
<dbReference type="PDBsum" id="6FL4"/>
<dbReference type="SMR" id="Q9CA40"/>
<dbReference type="FunCoup" id="Q9CA40">
    <property type="interactions" value="734"/>
</dbReference>
<dbReference type="STRING" id="3702.Q9CA40"/>
<dbReference type="GlyGen" id="Q9CA40">
    <property type="glycosylation" value="1 site"/>
</dbReference>
<dbReference type="iPTMnet" id="Q9CA40"/>
<dbReference type="PaxDb" id="3702-AT1G68760.1"/>
<dbReference type="ProteomicsDB" id="249351"/>
<dbReference type="EnsemblPlants" id="AT1G68760.1">
    <property type="protein sequence ID" value="AT1G68760.1"/>
    <property type="gene ID" value="AT1G68760"/>
</dbReference>
<dbReference type="GeneID" id="843207"/>
<dbReference type="Gramene" id="AT1G68760.1">
    <property type="protein sequence ID" value="AT1G68760.1"/>
    <property type="gene ID" value="AT1G68760"/>
</dbReference>
<dbReference type="KEGG" id="ath:AT1G68760"/>
<dbReference type="Araport" id="AT1G68760"/>
<dbReference type="TAIR" id="AT1G68760">
    <property type="gene designation" value="NUDX1"/>
</dbReference>
<dbReference type="eggNOG" id="ENOG502S3YT">
    <property type="taxonomic scope" value="Eukaryota"/>
</dbReference>
<dbReference type="HOGENOM" id="CLU_037162_9_2_1"/>
<dbReference type="InParanoid" id="Q9CA40"/>
<dbReference type="OMA" id="HFEASRN"/>
<dbReference type="OrthoDB" id="447842at2759"/>
<dbReference type="PhylomeDB" id="Q9CA40"/>
<dbReference type="BioCyc" id="ARA:AT1G68760-MONOMER"/>
<dbReference type="BioCyc" id="MetaCyc:AT1G68760-MONOMER"/>
<dbReference type="BRENDA" id="3.6.1.55">
    <property type="organism ID" value="399"/>
</dbReference>
<dbReference type="BRENDA" id="3.6.1.67">
    <property type="organism ID" value="399"/>
</dbReference>
<dbReference type="SABIO-RK" id="Q9CA40"/>
<dbReference type="PRO" id="PR:Q9CA40"/>
<dbReference type="Proteomes" id="UP000006548">
    <property type="component" value="Chromosome 1"/>
</dbReference>
<dbReference type="ExpressionAtlas" id="Q9CA40">
    <property type="expression patterns" value="baseline and differential"/>
</dbReference>
<dbReference type="GO" id="GO:0005829">
    <property type="term" value="C:cytosol"/>
    <property type="evidence" value="ECO:0000314"/>
    <property type="project" value="TAIR"/>
</dbReference>
<dbReference type="GO" id="GO:0035539">
    <property type="term" value="F:8-oxo-7,8-dihydrodeoxyguanosine triphosphate pyrophosphatase activity"/>
    <property type="evidence" value="ECO:0007669"/>
    <property type="project" value="UniProtKB-EC"/>
</dbReference>
<dbReference type="GO" id="GO:0008413">
    <property type="term" value="F:8-oxo-7,8-dihydroguanosine triphosphate pyrophosphatase activity"/>
    <property type="evidence" value="ECO:0000314"/>
    <property type="project" value="TAIR"/>
</dbReference>
<dbReference type="GO" id="GO:0019177">
    <property type="term" value="F:dihydroneopterin triphosphate pyrophosphohydrolase activity"/>
    <property type="evidence" value="ECO:0000314"/>
    <property type="project" value="TAIR"/>
</dbReference>
<dbReference type="GO" id="GO:0046872">
    <property type="term" value="F:metal ion binding"/>
    <property type="evidence" value="ECO:0007669"/>
    <property type="project" value="UniProtKB-KW"/>
</dbReference>
<dbReference type="GO" id="GO:0000210">
    <property type="term" value="F:NAD+ diphosphatase activity"/>
    <property type="evidence" value="ECO:0007669"/>
    <property type="project" value="RHEA"/>
</dbReference>
<dbReference type="GO" id="GO:0035529">
    <property type="term" value="F:NADH pyrophosphatase activity"/>
    <property type="evidence" value="ECO:0007669"/>
    <property type="project" value="RHEA"/>
</dbReference>
<dbReference type="GO" id="GO:0006974">
    <property type="term" value="P:DNA damage response"/>
    <property type="evidence" value="ECO:0000315"/>
    <property type="project" value="TAIR"/>
</dbReference>
<dbReference type="CDD" id="cd04678">
    <property type="entry name" value="NUDIX_MTH2_Nudt15"/>
    <property type="match status" value="1"/>
</dbReference>
<dbReference type="FunFam" id="3.90.79.10:FF:000034">
    <property type="entry name" value="Nucleotide triphosphate diphosphatase NUDT15"/>
    <property type="match status" value="1"/>
</dbReference>
<dbReference type="Gene3D" id="3.90.79.10">
    <property type="entry name" value="Nucleoside Triphosphate Pyrophosphohydrolase"/>
    <property type="match status" value="1"/>
</dbReference>
<dbReference type="InterPro" id="IPR020476">
    <property type="entry name" value="Nudix_hydrolase"/>
</dbReference>
<dbReference type="InterPro" id="IPR015797">
    <property type="entry name" value="NUDIX_hydrolase-like_dom_sf"/>
</dbReference>
<dbReference type="InterPro" id="IPR020084">
    <property type="entry name" value="NUDIX_hydrolase_CS"/>
</dbReference>
<dbReference type="InterPro" id="IPR000086">
    <property type="entry name" value="NUDIX_hydrolase_dom"/>
</dbReference>
<dbReference type="PANTHER" id="PTHR16099">
    <property type="entry name" value="8-OXO-DGTP DIPHOSPHATES NUDT15"/>
    <property type="match status" value="1"/>
</dbReference>
<dbReference type="PANTHER" id="PTHR16099:SF5">
    <property type="entry name" value="NUCLEOTIDE TRIPHOSPHATE DIPHOSPHATASE NUDT15"/>
    <property type="match status" value="1"/>
</dbReference>
<dbReference type="Pfam" id="PF00293">
    <property type="entry name" value="NUDIX"/>
    <property type="match status" value="1"/>
</dbReference>
<dbReference type="PRINTS" id="PR00502">
    <property type="entry name" value="NUDIXFAMILY"/>
</dbReference>
<dbReference type="SUPFAM" id="SSF55811">
    <property type="entry name" value="Nudix"/>
    <property type="match status" value="1"/>
</dbReference>
<dbReference type="PROSITE" id="PS51462">
    <property type="entry name" value="NUDIX"/>
    <property type="match status" value="1"/>
</dbReference>
<dbReference type="PROSITE" id="PS00893">
    <property type="entry name" value="NUDIX_BOX"/>
    <property type="match status" value="1"/>
</dbReference>
<gene>
    <name type="primary">NUDT1</name>
    <name type="synonym">NUDX1</name>
    <name type="ordered locus">At1g68760</name>
    <name type="ORF">F14K14.13</name>
</gene>
<reference key="1">
    <citation type="journal article" date="2000" name="Nature">
        <title>Sequence and analysis of chromosome 1 of the plant Arabidopsis thaliana.</title>
        <authorList>
            <person name="Theologis A."/>
            <person name="Ecker J.R."/>
            <person name="Palm C.J."/>
            <person name="Federspiel N.A."/>
            <person name="Kaul S."/>
            <person name="White O."/>
            <person name="Alonso J."/>
            <person name="Altafi H."/>
            <person name="Araujo R."/>
            <person name="Bowman C.L."/>
            <person name="Brooks S.Y."/>
            <person name="Buehler E."/>
            <person name="Chan A."/>
            <person name="Chao Q."/>
            <person name="Chen H."/>
            <person name="Cheuk R.F."/>
            <person name="Chin C.W."/>
            <person name="Chung M.K."/>
            <person name="Conn L."/>
            <person name="Conway A.B."/>
            <person name="Conway A.R."/>
            <person name="Creasy T.H."/>
            <person name="Dewar K."/>
            <person name="Dunn P."/>
            <person name="Etgu P."/>
            <person name="Feldblyum T.V."/>
            <person name="Feng J.-D."/>
            <person name="Fong B."/>
            <person name="Fujii C.Y."/>
            <person name="Gill J.E."/>
            <person name="Goldsmith A.D."/>
            <person name="Haas B."/>
            <person name="Hansen N.F."/>
            <person name="Hughes B."/>
            <person name="Huizar L."/>
            <person name="Hunter J.L."/>
            <person name="Jenkins J."/>
            <person name="Johnson-Hopson C."/>
            <person name="Khan S."/>
            <person name="Khaykin E."/>
            <person name="Kim C.J."/>
            <person name="Koo H.L."/>
            <person name="Kremenetskaia I."/>
            <person name="Kurtz D.B."/>
            <person name="Kwan A."/>
            <person name="Lam B."/>
            <person name="Langin-Hooper S."/>
            <person name="Lee A."/>
            <person name="Lee J.M."/>
            <person name="Lenz C.A."/>
            <person name="Li J.H."/>
            <person name="Li Y.-P."/>
            <person name="Lin X."/>
            <person name="Liu S.X."/>
            <person name="Liu Z.A."/>
            <person name="Luros J.S."/>
            <person name="Maiti R."/>
            <person name="Marziali A."/>
            <person name="Militscher J."/>
            <person name="Miranda M."/>
            <person name="Nguyen M."/>
            <person name="Nierman W.C."/>
            <person name="Osborne B.I."/>
            <person name="Pai G."/>
            <person name="Peterson J."/>
            <person name="Pham P.K."/>
            <person name="Rizzo M."/>
            <person name="Rooney T."/>
            <person name="Rowley D."/>
            <person name="Sakano H."/>
            <person name="Salzberg S.L."/>
            <person name="Schwartz J.R."/>
            <person name="Shinn P."/>
            <person name="Southwick A.M."/>
            <person name="Sun H."/>
            <person name="Tallon L.J."/>
            <person name="Tambunga G."/>
            <person name="Toriumi M.J."/>
            <person name="Town C.D."/>
            <person name="Utterback T."/>
            <person name="Van Aken S."/>
            <person name="Vaysberg M."/>
            <person name="Vysotskaia V.S."/>
            <person name="Walker M."/>
            <person name="Wu D."/>
            <person name="Yu G."/>
            <person name="Fraser C.M."/>
            <person name="Venter J.C."/>
            <person name="Davis R.W."/>
        </authorList>
    </citation>
    <scope>NUCLEOTIDE SEQUENCE [LARGE SCALE GENOMIC DNA]</scope>
    <source>
        <strain>cv. Columbia</strain>
    </source>
</reference>
<reference key="2">
    <citation type="journal article" date="2017" name="Plant J.">
        <title>Araport11: a complete reannotation of the Arabidopsis thaliana reference genome.</title>
        <authorList>
            <person name="Cheng C.Y."/>
            <person name="Krishnakumar V."/>
            <person name="Chan A.P."/>
            <person name="Thibaud-Nissen F."/>
            <person name="Schobel S."/>
            <person name="Town C.D."/>
        </authorList>
    </citation>
    <scope>GENOME REANNOTATION</scope>
    <source>
        <strain>cv. Columbia</strain>
    </source>
</reference>
<reference key="3">
    <citation type="journal article" date="2002" name="Science">
        <title>Functional annotation of a full-length Arabidopsis cDNA collection.</title>
        <authorList>
            <person name="Seki M."/>
            <person name="Narusaka M."/>
            <person name="Kamiya A."/>
            <person name="Ishida J."/>
            <person name="Satou M."/>
            <person name="Sakurai T."/>
            <person name="Nakajima M."/>
            <person name="Enju A."/>
            <person name="Akiyama K."/>
            <person name="Oono Y."/>
            <person name="Muramatsu M."/>
            <person name="Hayashizaki Y."/>
            <person name="Kawai J."/>
            <person name="Carninci P."/>
            <person name="Itoh M."/>
            <person name="Ishii Y."/>
            <person name="Arakawa T."/>
            <person name="Shibata K."/>
            <person name="Shinagawa A."/>
            <person name="Shinozaki K."/>
        </authorList>
    </citation>
    <scope>NUCLEOTIDE SEQUENCE [LARGE SCALE MRNA]</scope>
    <source>
        <strain>cv. Columbia</strain>
    </source>
</reference>
<reference key="4">
    <citation type="journal article" date="2003" name="Science">
        <title>Empirical analysis of transcriptional activity in the Arabidopsis genome.</title>
        <authorList>
            <person name="Yamada K."/>
            <person name="Lim J."/>
            <person name="Dale J.M."/>
            <person name="Chen H."/>
            <person name="Shinn P."/>
            <person name="Palm C.J."/>
            <person name="Southwick A.M."/>
            <person name="Wu H.C."/>
            <person name="Kim C.J."/>
            <person name="Nguyen M."/>
            <person name="Pham P.K."/>
            <person name="Cheuk R.F."/>
            <person name="Karlin-Newmann G."/>
            <person name="Liu S.X."/>
            <person name="Lam B."/>
            <person name="Sakano H."/>
            <person name="Wu T."/>
            <person name="Yu G."/>
            <person name="Miranda M."/>
            <person name="Quach H.L."/>
            <person name="Tripp M."/>
            <person name="Chang C.H."/>
            <person name="Lee J.M."/>
            <person name="Toriumi M.J."/>
            <person name="Chan M.M."/>
            <person name="Tang C.C."/>
            <person name="Onodera C.S."/>
            <person name="Deng J.M."/>
            <person name="Akiyama K."/>
            <person name="Ansari Y."/>
            <person name="Arakawa T."/>
            <person name="Banh J."/>
            <person name="Banno F."/>
            <person name="Bowser L."/>
            <person name="Brooks S.Y."/>
            <person name="Carninci P."/>
            <person name="Chao Q."/>
            <person name="Choy N."/>
            <person name="Enju A."/>
            <person name="Goldsmith A.D."/>
            <person name="Gurjal M."/>
            <person name="Hansen N.F."/>
            <person name="Hayashizaki Y."/>
            <person name="Johnson-Hopson C."/>
            <person name="Hsuan V.W."/>
            <person name="Iida K."/>
            <person name="Karnes M."/>
            <person name="Khan S."/>
            <person name="Koesema E."/>
            <person name="Ishida J."/>
            <person name="Jiang P.X."/>
            <person name="Jones T."/>
            <person name="Kawai J."/>
            <person name="Kamiya A."/>
            <person name="Meyers C."/>
            <person name="Nakajima M."/>
            <person name="Narusaka M."/>
            <person name="Seki M."/>
            <person name="Sakurai T."/>
            <person name="Satou M."/>
            <person name="Tamse R."/>
            <person name="Vaysberg M."/>
            <person name="Wallender E.K."/>
            <person name="Wong C."/>
            <person name="Yamamura Y."/>
            <person name="Yuan S."/>
            <person name="Shinozaki K."/>
            <person name="Davis R.W."/>
            <person name="Theologis A."/>
            <person name="Ecker J.R."/>
        </authorList>
    </citation>
    <scope>NUCLEOTIDE SEQUENCE [LARGE SCALE MRNA]</scope>
    <source>
        <strain>cv. Columbia</strain>
    </source>
</reference>
<reference key="5">
    <citation type="submission" date="2004-09" db="EMBL/GenBank/DDBJ databases">
        <title>Large-scale analysis of RIKEN Arabidopsis full-length (RAFL) cDNAs.</title>
        <authorList>
            <person name="Totoki Y."/>
            <person name="Seki M."/>
            <person name="Ishida J."/>
            <person name="Nakajima M."/>
            <person name="Enju A."/>
            <person name="Kamiya A."/>
            <person name="Narusaka M."/>
            <person name="Shin-i T."/>
            <person name="Nakagawa M."/>
            <person name="Sakamoto N."/>
            <person name="Oishi K."/>
            <person name="Kohara Y."/>
            <person name="Kobayashi M."/>
            <person name="Toyoda A."/>
            <person name="Sakaki Y."/>
            <person name="Sakurai T."/>
            <person name="Iida K."/>
            <person name="Akiyama K."/>
            <person name="Satou M."/>
            <person name="Toyoda T."/>
            <person name="Konagaya A."/>
            <person name="Carninci P."/>
            <person name="Kawai J."/>
            <person name="Hayashizaki Y."/>
            <person name="Shinozaki K."/>
        </authorList>
    </citation>
    <scope>NUCLEOTIDE SEQUENCE [LARGE SCALE MRNA]</scope>
    <source>
        <strain>cv. Columbia</strain>
    </source>
</reference>
<reference key="6">
    <citation type="submission" date="2002-03" db="EMBL/GenBank/DDBJ databases">
        <title>Full-length cDNA from Arabidopsis thaliana.</title>
        <authorList>
            <person name="Brover V.V."/>
            <person name="Troukhan M.E."/>
            <person name="Alexandrov N.A."/>
            <person name="Lu Y.-P."/>
            <person name="Flavell R.B."/>
            <person name="Feldmann K.A."/>
        </authorList>
    </citation>
    <scope>NUCLEOTIDE SEQUENCE [LARGE SCALE MRNA]</scope>
</reference>
<reference key="7">
    <citation type="journal article" date="2002" name="J. Biol. Chem.">
        <title>Cloning and characterization of the first member of the Nudix family from Arabidopsis thaliana.</title>
        <authorList>
            <person name="Dobrzanska M."/>
            <person name="Szurmak B."/>
            <person name="Wyslouch-Cieszynska A."/>
            <person name="Kraszewska E."/>
        </authorList>
    </citation>
    <scope>NADH PYROPHOSPHATASE ACTIVITY</scope>
    <scope>SUBUNIT</scope>
    <scope>COFACTOR</scope>
    <scope>BIOPHYSICOCHEMICAL PROPERTIES</scope>
</reference>
<reference key="8">
    <citation type="journal article" date="2005" name="J. Biol. Chem.">
        <title>A nudix enzyme removes pyrophosphate from dihydroneopterin triphosphate in the folate synthesis pathway of bacteria and plants.</title>
        <authorList>
            <person name="Klaus S.M.J."/>
            <person name="Wegkamp A."/>
            <person name="Sybesma W."/>
            <person name="Hugenholtz J."/>
            <person name="Gregory J.F. III"/>
            <person name="Hanson A.D."/>
        </authorList>
    </citation>
    <scope>FUNCTION</scope>
    <scope>CATALYTIC ACTIVITY AS DIHYDRONEOPTERIN PYROPHOSPHATASE</scope>
</reference>
<reference key="9">
    <citation type="journal article" date="2005" name="J. Biol. Chem.">
        <title>Comprehensive analysis of cytosolic nudix hydrolases in Arabidopsis thaliana.</title>
        <authorList>
            <person name="Ogawa T."/>
            <person name="Ueda Y."/>
            <person name="Yoshimura K."/>
            <person name="Shigeoka S."/>
        </authorList>
    </citation>
    <scope>FUNCTION IN VITRO</scope>
    <scope>BIOPHYSICOCHEMICAL PROPERTIES</scope>
    <scope>COFACTOR</scope>
    <scope>TISSUE SPECIFICITY</scope>
</reference>
<reference key="10">
    <citation type="journal article" date="2007" name="Plant Cell Physiol.">
        <title>AtNUDX1, an 8-oxo-7,8-dihydro-2'-deoxyguanosine 5'-triphosphate pyrophosphohydrolase, is responsible for eliminating oxidized nucleotides in Arabidopsis.</title>
        <authorList>
            <person name="Yoshimura K."/>
            <person name="Ogawa T."/>
            <person name="Ueda Y."/>
            <person name="Shigeoka S."/>
        </authorList>
    </citation>
    <scope>FUNCTION</scope>
    <scope>CATALYTIC ACTIVITY</scope>
    <scope>BIOPHYSICOCHEMICAL PROPERTIES</scope>
    <scope>SUBCELLULAR LOCATION</scope>
    <scope>INDUCTION</scope>
    <scope>DISRUPTION PHENOTYPE</scope>
</reference>
<reference key="11">
    <citation type="journal article" date="2012" name="Mol. Cell. Proteomics">
        <title>Comparative large-scale characterisation of plant vs. mammal proteins reveals similar and idiosyncratic N-alpha acetylation features.</title>
        <authorList>
            <person name="Bienvenut W.V."/>
            <person name="Sumpton D."/>
            <person name="Martinez A."/>
            <person name="Lilla S."/>
            <person name="Espagne C."/>
            <person name="Meinnel T."/>
            <person name="Giglione C."/>
        </authorList>
    </citation>
    <scope>ACETYLATION [LARGE SCALE ANALYSIS] AT SER-2</scope>
    <scope>CLEAVAGE OF INITIATOR METHIONINE [LARGE SCALE ANALYSIS]</scope>
    <scope>IDENTIFICATION BY MASS SPECTROMETRY [LARGE SCALE ANALYSIS]</scope>
</reference>
<accession>Q9CA40</accession>
<evidence type="ECO:0000250" key="1"/>
<evidence type="ECO:0000255" key="2">
    <source>
        <dbReference type="PROSITE-ProRule" id="PRU00794"/>
    </source>
</evidence>
<evidence type="ECO:0000269" key="3">
    <source>
    </source>
</evidence>
<evidence type="ECO:0000269" key="4">
    <source>
    </source>
</evidence>
<evidence type="ECO:0000269" key="5">
    <source>
    </source>
</evidence>
<evidence type="ECO:0000269" key="6">
    <source>
    </source>
</evidence>
<evidence type="ECO:0000305" key="7"/>
<evidence type="ECO:0007744" key="8">
    <source>
    </source>
</evidence>
<evidence type="ECO:0007829" key="9">
    <source>
        <dbReference type="PDB" id="5WWD"/>
    </source>
</evidence>
<evidence type="ECO:0007829" key="10">
    <source>
        <dbReference type="PDB" id="6FL4"/>
    </source>
</evidence>
<comment type="function">
    <text evidence="4 5 6">Mediates the hydrolysis of some nucleoside diphosphate derivatives. Its substrate specificity is unclear. In vitro, it can use NTP, dNTP, 8-oxo-GTP, 8-oxo-dGTP, dGTP, dATP, dTTP or dihydroneopterin triphosphate (DHNTP) as substrate. Has some NADH pyrophosphatase activity in vitro; however, such activity may not be relevant in vivo due to the high concentration of manganese used during the experiments. Plays an important role in protection against oxidative DNA and RNA damage by removing oxidatively damaged form of guanine.</text>
</comment>
<comment type="catalytic activity">
    <reaction evidence="4">
        <text>7,8-dihydroneopterin 3'-triphosphate + H2O = 7,8-dihydroneopterin 3'-phosphate + diphosphate + H(+)</text>
        <dbReference type="Rhea" id="RHEA:25302"/>
        <dbReference type="ChEBI" id="CHEBI:15377"/>
        <dbReference type="ChEBI" id="CHEBI:15378"/>
        <dbReference type="ChEBI" id="CHEBI:33019"/>
        <dbReference type="ChEBI" id="CHEBI:58462"/>
        <dbReference type="ChEBI" id="CHEBI:58762"/>
        <dbReference type="EC" id="3.6.1.67"/>
    </reaction>
</comment>
<comment type="catalytic activity">
    <reaction evidence="6">
        <text>NAD(+) + H2O = beta-nicotinamide D-ribonucleotide + AMP + 2 H(+)</text>
        <dbReference type="Rhea" id="RHEA:11800"/>
        <dbReference type="ChEBI" id="CHEBI:14649"/>
        <dbReference type="ChEBI" id="CHEBI:15377"/>
        <dbReference type="ChEBI" id="CHEBI:15378"/>
        <dbReference type="ChEBI" id="CHEBI:57540"/>
        <dbReference type="ChEBI" id="CHEBI:456215"/>
        <dbReference type="EC" id="3.6.1.22"/>
    </reaction>
</comment>
<comment type="catalytic activity">
    <reaction evidence="6">
        <text>NADH + H2O = reduced beta-nicotinamide D-ribonucleotide + AMP + 2 H(+)</text>
        <dbReference type="Rhea" id="RHEA:48868"/>
        <dbReference type="ChEBI" id="CHEBI:15377"/>
        <dbReference type="ChEBI" id="CHEBI:15378"/>
        <dbReference type="ChEBI" id="CHEBI:57945"/>
        <dbReference type="ChEBI" id="CHEBI:90832"/>
        <dbReference type="ChEBI" id="CHEBI:456215"/>
        <dbReference type="EC" id="3.6.1.22"/>
    </reaction>
</comment>
<comment type="catalytic activity">
    <reaction evidence="6">
        <text>8-oxo-dGTP + H2O = 8-oxo-dGMP + diphosphate + H(+)</text>
        <dbReference type="Rhea" id="RHEA:31575"/>
        <dbReference type="ChEBI" id="CHEBI:15377"/>
        <dbReference type="ChEBI" id="CHEBI:15378"/>
        <dbReference type="ChEBI" id="CHEBI:33019"/>
        <dbReference type="ChEBI" id="CHEBI:63224"/>
        <dbReference type="ChEBI" id="CHEBI:77896"/>
        <dbReference type="EC" id="3.6.1.55"/>
    </reaction>
</comment>
<comment type="cofactor">
    <cofactor evidence="3 5">
        <name>Mg(2+)</name>
        <dbReference type="ChEBI" id="CHEBI:18420"/>
    </cofactor>
    <cofactor evidence="3 5">
        <name>Mn(2+)</name>
        <dbReference type="ChEBI" id="CHEBI:29035"/>
    </cofactor>
    <text evidence="3 5">Magnesium may be the real cofactor in vivo.</text>
</comment>
<comment type="biophysicochemical properties">
    <kinetics>
        <KM evidence="3 5 6">0.36 mM for NADH (in the presence of 5 mM of manganese)</KM>
        <KM evidence="3 5 6">0.48 mM for NAD (in the presence of 5 mM of manganese)</KM>
        <KM evidence="3 5 6">6.8 uM for 8-oxo-dGTP</KM>
        <KM evidence="3 5 6">28.1 uM for 8-oxo-GTP</KM>
        <KM evidence="3 5 6">58.3 uM for dGTP</KM>
        <KM evidence="3 5 6">16.1 uM for dATP</KM>
        <KM evidence="3 5 6">15.6 uM for dTTP</KM>
        <Vmax evidence="3 5 6">12.7 umol/min/mg enzyme toward NADH (in the presence of 5 mM of manganese)</Vmax>
        <Vmax evidence="3 5 6">0.62 umol/min/mg enzyme toward NAD (in the presence of 5 mM of manganese)</Vmax>
        <Vmax evidence="3 5 6">0.8 umol/min/mg enzyme toward 8-oxo-dGTP</Vmax>
        <Vmax evidence="3 5 6">1.7 umol/min/mg enzyme toward 8-oxo-GTP</Vmax>
        <Vmax evidence="3 5 6">2.7 umol/min/mg enzyme toward dGTP</Vmax>
        <Vmax evidence="3 5 6">5.8 umol/min/mg enzyme toward dATP</Vmax>
        <Vmax evidence="3 5 6">0.8 umol/min/mg enzyme toward dTTP</Vmax>
    </kinetics>
</comment>
<comment type="subunit">
    <text evidence="3">Homodimer.</text>
</comment>
<comment type="subcellular location">
    <subcellularLocation>
        <location evidence="6">Cytoplasm</location>
    </subcellularLocation>
</comment>
<comment type="tissue specificity">
    <text evidence="5">Expressed in roots, stems and leaves.</text>
</comment>
<comment type="induction">
    <text evidence="6">Not induced by paraquat, salinity, high light and drought.</text>
</comment>
<comment type="disruption phenotype">
    <text evidence="6">Increased level of 8-oxo-G in genomic DNA.</text>
</comment>
<comment type="miscellaneous">
    <text>Has the ability to complement a mutation of mutT in E.coli and thereby completely suppress the increased frequency of spontaneous mutations.</text>
</comment>
<comment type="similarity">
    <text evidence="7">Belongs to the Nudix hydrolase family.</text>
</comment>
<name>NUDT1_ARATH</name>
<keyword id="KW-0002">3D-structure</keyword>
<keyword id="KW-0007">Acetylation</keyword>
<keyword id="KW-0963">Cytoplasm</keyword>
<keyword id="KW-0378">Hydrolase</keyword>
<keyword id="KW-0460">Magnesium</keyword>
<keyword id="KW-0464">Manganese</keyword>
<keyword id="KW-0479">Metal-binding</keyword>
<keyword id="KW-0520">NAD</keyword>
<keyword id="KW-1185">Reference proteome</keyword>
<sequence>MSTGEAIPRVAVVVFILNGNSILLGRRRSSIGNSTFALPGGHLEFGESFEECAAREVMEETGLKIEKMKLLTVTNNVFKEAPTPSHYVSVSIRAVLVDPSQEPKNMEPEKCEGWDWYDWENLPKPLFWPLEKLFGSGFNPFTHGGGD</sequence>